<protein>
    <recommendedName>
        <fullName>Probable glucan 1,3-alpha-glucosidase</fullName>
        <ecNumber evidence="2">3.2.1.207</ecNumber>
    </recommendedName>
    <alternativeName>
        <fullName>Glucosidase II subunit alpha</fullName>
    </alternativeName>
</protein>
<name>GLU2A_ORYSJ</name>
<dbReference type="EC" id="3.2.1.207" evidence="2"/>
<dbReference type="EMBL" id="DP000009">
    <property type="protein sequence ID" value="ABF94648.1"/>
    <property type="status" value="ALT_SEQ"/>
    <property type="molecule type" value="Genomic_DNA"/>
</dbReference>
<dbReference type="EMBL" id="AP008209">
    <property type="protein sequence ID" value="BAF11299.1"/>
    <property type="status" value="ALT_SEQ"/>
    <property type="molecule type" value="Genomic_DNA"/>
</dbReference>
<dbReference type="EMBL" id="AP014959">
    <property type="status" value="NOT_ANNOTATED_CDS"/>
    <property type="molecule type" value="Genomic_DNA"/>
</dbReference>
<dbReference type="EMBL" id="CM000140">
    <property type="protein sequence ID" value="EEE58592.1"/>
    <property type="molecule type" value="Genomic_DNA"/>
</dbReference>
<dbReference type="RefSeq" id="XP_015631638.1">
    <property type="nucleotide sequence ID" value="XM_015776152.1"/>
</dbReference>
<dbReference type="SMR" id="B9F676"/>
<dbReference type="FunCoup" id="B9F676">
    <property type="interactions" value="3763"/>
</dbReference>
<dbReference type="STRING" id="39947.B9F676"/>
<dbReference type="CAZy" id="GH31">
    <property type="family name" value="Glycoside Hydrolase Family 31"/>
</dbReference>
<dbReference type="PaxDb" id="39947-B9F676"/>
<dbReference type="KEGG" id="dosa:Os03g0216600"/>
<dbReference type="eggNOG" id="KOG1066">
    <property type="taxonomic scope" value="Eukaryota"/>
</dbReference>
<dbReference type="HOGENOM" id="CLU_000631_7_0_1"/>
<dbReference type="InParanoid" id="B9F676"/>
<dbReference type="OrthoDB" id="3237269at2759"/>
<dbReference type="UniPathway" id="UPA00957"/>
<dbReference type="Proteomes" id="UP000000763">
    <property type="component" value="Chromosome 3"/>
</dbReference>
<dbReference type="Proteomes" id="UP000007752">
    <property type="component" value="Chromosome 3"/>
</dbReference>
<dbReference type="Proteomes" id="UP000059680">
    <property type="component" value="Chromosome 3"/>
</dbReference>
<dbReference type="GO" id="GO:0005783">
    <property type="term" value="C:endoplasmic reticulum"/>
    <property type="evidence" value="ECO:0007669"/>
    <property type="project" value="UniProtKB-SubCell"/>
</dbReference>
<dbReference type="GO" id="GO:0090599">
    <property type="term" value="F:alpha-glucosidase activity"/>
    <property type="evidence" value="ECO:0000318"/>
    <property type="project" value="GO_Central"/>
</dbReference>
<dbReference type="GO" id="GO:0030246">
    <property type="term" value="F:carbohydrate binding"/>
    <property type="evidence" value="ECO:0007669"/>
    <property type="project" value="InterPro"/>
</dbReference>
<dbReference type="GO" id="GO:0106407">
    <property type="term" value="F:Glc2Man9GlcNAc2 oligosaccharide glucosidase activity"/>
    <property type="evidence" value="ECO:0007669"/>
    <property type="project" value="UniProtKB-EC"/>
</dbReference>
<dbReference type="GO" id="GO:0006952">
    <property type="term" value="P:defense response"/>
    <property type="evidence" value="ECO:0007669"/>
    <property type="project" value="UniProtKB-KW"/>
</dbReference>
<dbReference type="GO" id="GO:0006491">
    <property type="term" value="P:N-glycan processing"/>
    <property type="evidence" value="ECO:0000318"/>
    <property type="project" value="GO_Central"/>
</dbReference>
<dbReference type="GO" id="GO:0000272">
    <property type="term" value="P:polysaccharide catabolic process"/>
    <property type="evidence" value="ECO:0007669"/>
    <property type="project" value="UniProtKB-ARBA"/>
</dbReference>
<dbReference type="CDD" id="cd06603">
    <property type="entry name" value="GH31_GANC_GANAB_alpha"/>
    <property type="match status" value="1"/>
</dbReference>
<dbReference type="CDD" id="cd14752">
    <property type="entry name" value="GH31_N"/>
    <property type="match status" value="1"/>
</dbReference>
<dbReference type="FunFam" id="3.20.20.80:FF:000046">
    <property type="entry name" value="Glucosidase alpha, neutral C"/>
    <property type="match status" value="1"/>
</dbReference>
<dbReference type="FunFam" id="3.20.20.80:FF:000039">
    <property type="entry name" value="Glucosidase, alpha neutral C"/>
    <property type="match status" value="1"/>
</dbReference>
<dbReference type="Gene3D" id="3.20.20.80">
    <property type="entry name" value="Glycosidases"/>
    <property type="match status" value="2"/>
</dbReference>
<dbReference type="Gene3D" id="2.60.40.1760">
    <property type="entry name" value="glycosyl hydrolase (family 31)"/>
    <property type="match status" value="1"/>
</dbReference>
<dbReference type="Gene3D" id="2.60.40.1180">
    <property type="entry name" value="Golgi alpha-mannosidase II"/>
    <property type="match status" value="2"/>
</dbReference>
<dbReference type="InterPro" id="IPR011013">
    <property type="entry name" value="Gal_mutarotase_sf_dom"/>
</dbReference>
<dbReference type="InterPro" id="IPR030458">
    <property type="entry name" value="Glyco_hydro_31_AS"/>
</dbReference>
<dbReference type="InterPro" id="IPR048395">
    <property type="entry name" value="Glyco_hydro_31_C"/>
</dbReference>
<dbReference type="InterPro" id="IPR025887">
    <property type="entry name" value="Glyco_hydro_31_N_dom"/>
</dbReference>
<dbReference type="InterPro" id="IPR000322">
    <property type="entry name" value="Glyco_hydro_31_TIM"/>
</dbReference>
<dbReference type="InterPro" id="IPR013780">
    <property type="entry name" value="Glyco_hydro_b"/>
</dbReference>
<dbReference type="InterPro" id="IPR017853">
    <property type="entry name" value="Glycoside_hydrolase_SF"/>
</dbReference>
<dbReference type="PANTHER" id="PTHR22762">
    <property type="entry name" value="ALPHA-GLUCOSIDASE"/>
    <property type="match status" value="1"/>
</dbReference>
<dbReference type="PANTHER" id="PTHR22762:SF54">
    <property type="entry name" value="BCDNA.GH04962"/>
    <property type="match status" value="1"/>
</dbReference>
<dbReference type="Pfam" id="PF13802">
    <property type="entry name" value="Gal_mutarotas_2"/>
    <property type="match status" value="1"/>
</dbReference>
<dbReference type="Pfam" id="PF01055">
    <property type="entry name" value="Glyco_hydro_31_2nd"/>
    <property type="match status" value="1"/>
</dbReference>
<dbReference type="Pfam" id="PF21365">
    <property type="entry name" value="Glyco_hydro_31_3rd"/>
    <property type="match status" value="1"/>
</dbReference>
<dbReference type="SUPFAM" id="SSF51445">
    <property type="entry name" value="(Trans)glycosidases"/>
    <property type="match status" value="1"/>
</dbReference>
<dbReference type="SUPFAM" id="SSF74650">
    <property type="entry name" value="Galactose mutarotase-like"/>
    <property type="match status" value="1"/>
</dbReference>
<dbReference type="SUPFAM" id="SSF51011">
    <property type="entry name" value="Glycosyl hydrolase domain"/>
    <property type="match status" value="1"/>
</dbReference>
<dbReference type="PROSITE" id="PS00129">
    <property type="entry name" value="GLYCOSYL_HYDROL_F31_1"/>
    <property type="match status" value="1"/>
</dbReference>
<accession>B9F676</accession>
<accession>Q0DTY9</accession>
<accession>Q10PY8</accession>
<sequence length="919" mass="103215">MDPPPRPRPHRVAVLLLLLLASSPAARAWKKDEFRNCNQTPFCKRARTRAPHSLDAPLSLDAASLAVATDGSLTASLSHPSRLRPLLLRLSALPPHALRLQIDEDYSSNTPPHRRFQVPDVLLPDVEARTLHLPQPKTSAAGVSTFALSSDVDVVVKHDPFELTVRRAGSGAPVLSFNSHGLFDFEPLQESKQEGETWEEQFRSHTDTRPRGPQSITFDVSFYGADFVYGLPEHGSTSLALRPTRGPGAEESEPYRLFNLDVFEYLHESPFGLYGSIPFMIAHGDGPSSGFFWLNAAEMQIDVLAPGWDGASSTENGRIDTLWMAEAGVVDAFFFVGSEPKDVIKQYISVTGTPSMPQQFAVAYHQCRWNYRDEEDVAGVDSGFDEHDIPYDVLWLDIEHTDGKRYFTWDHSAFPNPEVMQGKIADKGRKMVTIVDPHIKRDSSFHLHEEATAKGYYVKDATGKDFDGWCWPGASSYPDMLNPEIREWWADKFSYENYKGSTPTLYIWNDMNEPSVFNGPEVTMPRDAVHYGDVEHRELHNAYGYYFHMATADGLLKRGEGKDRPFVLSRAFFAGSQRYGAIWTGDNSADWDHLKSSIPMVLTLGLTGMTFSGADIGGFFGNPEPDLLVRWYQVGAFYPFFRGHAHHDTKRREPWLFGERRTALMREAIHMRYSLLPYYYTLFREASVTGVPVMRPLWLEFPDDKETYNNGEAFMVGPSLLAQGIYEEGQKSVSVYLPGEELWYDLRNGSPYKGGVSHKLEVSEDSIPSFQRAGAIVPRKDRFRRSSTQMVNDPYTLVIALNSSSAAEGELYVDDGKSYDYQQGAFIHRRFVFADNKLTSMNIAPKNLGNKKFSTECVIERIIILGVSSGSKKAIVEPGNHEVDIELGPISLRSGSSSVAPTVRKPNVRVVDDWTIRIA</sequence>
<gene>
    <name type="ordered locus">Os03g0216600</name>
    <name type="ordered locus">LOC_Os03g11720</name>
    <name type="ORF">OsJ_09923</name>
</gene>
<evidence type="ECO:0000250" key="1"/>
<evidence type="ECO:0000250" key="2">
    <source>
        <dbReference type="UniProtKB" id="P38138"/>
    </source>
</evidence>
<evidence type="ECO:0000255" key="3"/>
<evidence type="ECO:0000255" key="4">
    <source>
        <dbReference type="PROSITE-ProRule" id="PRU10066"/>
    </source>
</evidence>
<evidence type="ECO:0000305" key="5"/>
<comment type="function">
    <text evidence="2">Cleaves sequentially the 2 innermost alpha-1,3-linked glucose residues from the Glc(2)Man(9)GlcNAc(2) oligosaccharide precursor of immature glycoproteins. May be required for defense response elicited by pathogen-associated molecular patterns (PAMPs).</text>
</comment>
<comment type="catalytic activity">
    <reaction evidence="2">
        <text>N(4)-(alpha-D-Glc-(1-&gt;3)-alpha-D-Man-(1-&gt;2)-alpha-D-Man-(1-&gt;2)-alpha-D-Man-(1-&gt;3)-[alpha-D-Man-(1-&gt;2)-alpha-D-Man-(1-&gt;3)-[alpha-D-Man-(1-&gt;2)-alpha-D-Man-(1-&gt;6)]-alpha-D-Man-(1-&gt;6)]-beta-D-Man-(1-&gt;4)-beta-D-GlcNAc-(1-&gt;4)-beta-D-GlcNAc)-L-asparaginyl-[protein] + H2O = N(4)-(alpha-D-Man-(1-&gt;2)-alpha-D-Man-(1-&gt;2)-alpha-D-Man-(1-&gt;3)-[alpha-D-Man-(1-&gt;2)-alpha-D-Man-(1-&gt;3)-[alpha-D-Man-(1-&gt;2)-alpha-D-Man-(1-&gt;6)]-alpha-D-Man-(1-&gt;6)]-beta-D-Man-(1-&gt;4)-beta-D-GlcNAc-(1-&gt;4)-beta-D-GlcNAc)-L-asparaginyl-[protein] (N-glucan mannose isomer 9A1,2,3B1,2,3) + beta-D-glucose</text>
        <dbReference type="Rhea" id="RHEA:56000"/>
        <dbReference type="Rhea" id="RHEA-COMP:14356"/>
        <dbReference type="Rhea" id="RHEA-COMP:14357"/>
        <dbReference type="ChEBI" id="CHEBI:15377"/>
        <dbReference type="ChEBI" id="CHEBI:15903"/>
        <dbReference type="ChEBI" id="CHEBI:59080"/>
        <dbReference type="ChEBI" id="CHEBI:139493"/>
        <dbReference type="EC" id="3.2.1.207"/>
    </reaction>
</comment>
<comment type="catalytic activity">
    <reaction evidence="2">
        <text>N(4)-(alpha-D-Glc-(1-&gt;3)-alpha-D-Glc-(1-&gt;3)-alpha-D-Man-(1-&gt;2)-alpha-D-Man-(1-&gt;2)-alpha-D-Man-(1-&gt;3)-[alpha-D-Man-(1-&gt;2)-alpha-D-Man-(1-&gt;3)-[alpha-D-Man-(1-&gt;2)-alpha-D-Man-(1-&gt;6)]-alpha-D-Man-(1-&gt;6)]-beta-D-Man-(1-&gt;4)-beta-D-GlcNAc-(1-&gt;4)-beta-D-GlcNAc)-L-asparaginyl-[protein] + H2O = N(4)-(alpha-D-Glc-(1-&gt;3)-alpha-D-Man-(1-&gt;2)-alpha-D-Man-(1-&gt;2)-alpha-D-Man-(1-&gt;3)-[alpha-D-Man-(1-&gt;2)-alpha-D-Man-(1-&gt;3)-[alpha-D-Man-(1-&gt;2)-alpha-D-Man-(1-&gt;6)]-alpha-D-Man-(1-&gt;6)]-beta-D-Man-(1-&gt;4)-beta-D-GlcNAc-(1-&gt;4)-beta-D-GlcNAc)-L-asparaginyl-[protein] + beta-D-glucose</text>
        <dbReference type="Rhea" id="RHEA:55996"/>
        <dbReference type="Rhea" id="RHEA-COMP:14355"/>
        <dbReference type="Rhea" id="RHEA-COMP:14357"/>
        <dbReference type="ChEBI" id="CHEBI:15377"/>
        <dbReference type="ChEBI" id="CHEBI:15903"/>
        <dbReference type="ChEBI" id="CHEBI:59080"/>
        <dbReference type="ChEBI" id="CHEBI:59082"/>
        <dbReference type="EC" id="3.2.1.207"/>
    </reaction>
</comment>
<comment type="pathway">
    <text>Glycan metabolism; N-glycan metabolism.</text>
</comment>
<comment type="subunit">
    <text evidence="1">Heterodimer of a catalytic alpha subunit and a beta subunit.</text>
</comment>
<comment type="subcellular location">
    <subcellularLocation>
        <location evidence="1">Endoplasmic reticulum</location>
    </subcellularLocation>
</comment>
<comment type="similarity">
    <text evidence="5">Belongs to the glycosyl hydrolase 31 family.</text>
</comment>
<comment type="sequence caution" evidence="5">
    <conflict type="erroneous gene model prediction">
        <sequence resource="EMBL-CDS" id="ABF94648"/>
    </conflict>
</comment>
<comment type="sequence caution" evidence="5">
    <conflict type="erroneous gene model prediction">
        <sequence resource="EMBL-CDS" id="BAF11299"/>
    </conflict>
</comment>
<keyword id="KW-0256">Endoplasmic reticulum</keyword>
<keyword id="KW-0325">Glycoprotein</keyword>
<keyword id="KW-0326">Glycosidase</keyword>
<keyword id="KW-0378">Hydrolase</keyword>
<keyword id="KW-0611">Plant defense</keyword>
<keyword id="KW-1185">Reference proteome</keyword>
<keyword id="KW-0732">Signal</keyword>
<feature type="signal peptide" evidence="3">
    <location>
        <begin position="1"/>
        <end position="28"/>
    </location>
</feature>
<feature type="chain" id="PRO_0000425974" description="Probable glucan 1,3-alpha-glucosidase">
    <location>
        <begin position="29"/>
        <end position="919"/>
    </location>
</feature>
<feature type="active site" description="Nucleophile" evidence="4">
    <location>
        <position position="510"/>
    </location>
</feature>
<feature type="active site" evidence="1">
    <location>
        <position position="513"/>
    </location>
</feature>
<feature type="active site" description="Proton donor" evidence="1">
    <location>
        <position position="586"/>
    </location>
</feature>
<feature type="glycosylation site" description="N-linked (GlcNAc...) asparagine" evidence="3">
    <location>
        <position position="802"/>
    </location>
</feature>
<proteinExistence type="inferred from homology"/>
<organism>
    <name type="scientific">Oryza sativa subsp. japonica</name>
    <name type="common">Rice</name>
    <dbReference type="NCBI Taxonomy" id="39947"/>
    <lineage>
        <taxon>Eukaryota</taxon>
        <taxon>Viridiplantae</taxon>
        <taxon>Streptophyta</taxon>
        <taxon>Embryophyta</taxon>
        <taxon>Tracheophyta</taxon>
        <taxon>Spermatophyta</taxon>
        <taxon>Magnoliopsida</taxon>
        <taxon>Liliopsida</taxon>
        <taxon>Poales</taxon>
        <taxon>Poaceae</taxon>
        <taxon>BOP clade</taxon>
        <taxon>Oryzoideae</taxon>
        <taxon>Oryzeae</taxon>
        <taxon>Oryzinae</taxon>
        <taxon>Oryza</taxon>
        <taxon>Oryza sativa</taxon>
    </lineage>
</organism>
<reference key="1">
    <citation type="journal article" date="2005" name="Genome Res.">
        <title>Sequence, annotation, and analysis of synteny between rice chromosome 3 and diverged grass species.</title>
        <authorList>
            <consortium name="The rice chromosome 3 sequencing consortium"/>
            <person name="Buell C.R."/>
            <person name="Yuan Q."/>
            <person name="Ouyang S."/>
            <person name="Liu J."/>
            <person name="Zhu W."/>
            <person name="Wang A."/>
            <person name="Maiti R."/>
            <person name="Haas B."/>
            <person name="Wortman J."/>
            <person name="Pertea M."/>
            <person name="Jones K.M."/>
            <person name="Kim M."/>
            <person name="Overton L."/>
            <person name="Tsitrin T."/>
            <person name="Fadrosh D."/>
            <person name="Bera J."/>
            <person name="Weaver B."/>
            <person name="Jin S."/>
            <person name="Johri S."/>
            <person name="Reardon M."/>
            <person name="Webb K."/>
            <person name="Hill J."/>
            <person name="Moffat K."/>
            <person name="Tallon L."/>
            <person name="Van Aken S."/>
            <person name="Lewis M."/>
            <person name="Utterback T."/>
            <person name="Feldblyum T."/>
            <person name="Zismann V."/>
            <person name="Iobst S."/>
            <person name="Hsiao J."/>
            <person name="de Vazeille A.R."/>
            <person name="Salzberg S.L."/>
            <person name="White O."/>
            <person name="Fraser C.M."/>
            <person name="Yu Y."/>
            <person name="Kim H."/>
            <person name="Rambo T."/>
            <person name="Currie J."/>
            <person name="Collura K."/>
            <person name="Kernodle-Thompson S."/>
            <person name="Wei F."/>
            <person name="Kudrna K."/>
            <person name="Ammiraju J.S.S."/>
            <person name="Luo M."/>
            <person name="Goicoechea J.L."/>
            <person name="Wing R.A."/>
            <person name="Henry D."/>
            <person name="Oates R."/>
            <person name="Palmer M."/>
            <person name="Pries G."/>
            <person name="Saski C."/>
            <person name="Simmons J."/>
            <person name="Soderlund C."/>
            <person name="Nelson W."/>
            <person name="de la Bastide M."/>
            <person name="Spiegel L."/>
            <person name="Nascimento L."/>
            <person name="Huang E."/>
            <person name="Preston R."/>
            <person name="Zutavern T."/>
            <person name="Palmer L."/>
            <person name="O'Shaughnessy A."/>
            <person name="Dike S."/>
            <person name="McCombie W.R."/>
            <person name="Minx P."/>
            <person name="Cordum H."/>
            <person name="Wilson R."/>
            <person name="Jin W."/>
            <person name="Lee H.R."/>
            <person name="Jiang J."/>
            <person name="Jackson S."/>
        </authorList>
    </citation>
    <scope>NUCLEOTIDE SEQUENCE [LARGE SCALE GENOMIC DNA]</scope>
    <source>
        <strain>cv. Nipponbare</strain>
    </source>
</reference>
<reference key="2">
    <citation type="journal article" date="2005" name="Nature">
        <title>The map-based sequence of the rice genome.</title>
        <authorList>
            <consortium name="International rice genome sequencing project (IRGSP)"/>
        </authorList>
    </citation>
    <scope>NUCLEOTIDE SEQUENCE [LARGE SCALE GENOMIC DNA]</scope>
    <source>
        <strain>cv. Nipponbare</strain>
    </source>
</reference>
<reference key="3">
    <citation type="journal article" date="2008" name="Nucleic Acids Res.">
        <title>The rice annotation project database (RAP-DB): 2008 update.</title>
        <authorList>
            <consortium name="The rice annotation project (RAP)"/>
        </authorList>
    </citation>
    <scope>GENOME REANNOTATION</scope>
    <source>
        <strain>cv. Nipponbare</strain>
    </source>
</reference>
<reference key="4">
    <citation type="journal article" date="2013" name="Rice">
        <title>Improvement of the Oryza sativa Nipponbare reference genome using next generation sequence and optical map data.</title>
        <authorList>
            <person name="Kawahara Y."/>
            <person name="de la Bastide M."/>
            <person name="Hamilton J.P."/>
            <person name="Kanamori H."/>
            <person name="McCombie W.R."/>
            <person name="Ouyang S."/>
            <person name="Schwartz D.C."/>
            <person name="Tanaka T."/>
            <person name="Wu J."/>
            <person name="Zhou S."/>
            <person name="Childs K.L."/>
            <person name="Davidson R.M."/>
            <person name="Lin H."/>
            <person name="Quesada-Ocampo L."/>
            <person name="Vaillancourt B."/>
            <person name="Sakai H."/>
            <person name="Lee S.S."/>
            <person name="Kim J."/>
            <person name="Numa H."/>
            <person name="Itoh T."/>
            <person name="Buell C.R."/>
            <person name="Matsumoto T."/>
        </authorList>
    </citation>
    <scope>GENOME REANNOTATION</scope>
    <source>
        <strain>cv. Nipponbare</strain>
    </source>
</reference>
<reference key="5">
    <citation type="journal article" date="2005" name="PLoS Biol.">
        <title>The genomes of Oryza sativa: a history of duplications.</title>
        <authorList>
            <person name="Yu J."/>
            <person name="Wang J."/>
            <person name="Lin W."/>
            <person name="Li S."/>
            <person name="Li H."/>
            <person name="Zhou J."/>
            <person name="Ni P."/>
            <person name="Dong W."/>
            <person name="Hu S."/>
            <person name="Zeng C."/>
            <person name="Zhang J."/>
            <person name="Zhang Y."/>
            <person name="Li R."/>
            <person name="Xu Z."/>
            <person name="Li S."/>
            <person name="Li X."/>
            <person name="Zheng H."/>
            <person name="Cong L."/>
            <person name="Lin L."/>
            <person name="Yin J."/>
            <person name="Geng J."/>
            <person name="Li G."/>
            <person name="Shi J."/>
            <person name="Liu J."/>
            <person name="Lv H."/>
            <person name="Li J."/>
            <person name="Wang J."/>
            <person name="Deng Y."/>
            <person name="Ran L."/>
            <person name="Shi X."/>
            <person name="Wang X."/>
            <person name="Wu Q."/>
            <person name="Li C."/>
            <person name="Ren X."/>
            <person name="Wang J."/>
            <person name="Wang X."/>
            <person name="Li D."/>
            <person name="Liu D."/>
            <person name="Zhang X."/>
            <person name="Ji Z."/>
            <person name="Zhao W."/>
            <person name="Sun Y."/>
            <person name="Zhang Z."/>
            <person name="Bao J."/>
            <person name="Han Y."/>
            <person name="Dong L."/>
            <person name="Ji J."/>
            <person name="Chen P."/>
            <person name="Wu S."/>
            <person name="Liu J."/>
            <person name="Xiao Y."/>
            <person name="Bu D."/>
            <person name="Tan J."/>
            <person name="Yang L."/>
            <person name="Ye C."/>
            <person name="Zhang J."/>
            <person name="Xu J."/>
            <person name="Zhou Y."/>
            <person name="Yu Y."/>
            <person name="Zhang B."/>
            <person name="Zhuang S."/>
            <person name="Wei H."/>
            <person name="Liu B."/>
            <person name="Lei M."/>
            <person name="Yu H."/>
            <person name="Li Y."/>
            <person name="Xu H."/>
            <person name="Wei S."/>
            <person name="He X."/>
            <person name="Fang L."/>
            <person name="Zhang Z."/>
            <person name="Zhang Y."/>
            <person name="Huang X."/>
            <person name="Su Z."/>
            <person name="Tong W."/>
            <person name="Li J."/>
            <person name="Tong Z."/>
            <person name="Li S."/>
            <person name="Ye J."/>
            <person name="Wang L."/>
            <person name="Fang L."/>
            <person name="Lei T."/>
            <person name="Chen C.-S."/>
            <person name="Chen H.-C."/>
            <person name="Xu Z."/>
            <person name="Li H."/>
            <person name="Huang H."/>
            <person name="Zhang F."/>
            <person name="Xu H."/>
            <person name="Li N."/>
            <person name="Zhao C."/>
            <person name="Li S."/>
            <person name="Dong L."/>
            <person name="Huang Y."/>
            <person name="Li L."/>
            <person name="Xi Y."/>
            <person name="Qi Q."/>
            <person name="Li W."/>
            <person name="Zhang B."/>
            <person name="Hu W."/>
            <person name="Zhang Y."/>
            <person name="Tian X."/>
            <person name="Jiao Y."/>
            <person name="Liang X."/>
            <person name="Jin J."/>
            <person name="Gao L."/>
            <person name="Zheng W."/>
            <person name="Hao B."/>
            <person name="Liu S.-M."/>
            <person name="Wang W."/>
            <person name="Yuan L."/>
            <person name="Cao M."/>
            <person name="McDermott J."/>
            <person name="Samudrala R."/>
            <person name="Wang J."/>
            <person name="Wong G.K.-S."/>
            <person name="Yang H."/>
        </authorList>
    </citation>
    <scope>NUCLEOTIDE SEQUENCE [LARGE SCALE GENOMIC DNA]</scope>
    <source>
        <strain>cv. Nipponbare</strain>
    </source>
</reference>